<comment type="function">
    <text evidence="2">Catalyzes a proton abstraction reaction that results in 2,5-elimination of pyruvate from 2-succinyl-5-enolpyruvyl-6-hydroxy-3-cyclohexene-1-carboxylate (SEPHCHC) and the formation of 2-succinyl-6-hydroxy-2,4-cyclohexadiene-1-carboxylate (SHCHC).</text>
</comment>
<comment type="catalytic activity">
    <reaction evidence="2">
        <text>5-enolpyruvoyl-6-hydroxy-2-succinyl-cyclohex-3-ene-1-carboxylate = (1R,6R)-6-hydroxy-2-succinyl-cyclohexa-2,4-diene-1-carboxylate + pyruvate</text>
        <dbReference type="Rhea" id="RHEA:25597"/>
        <dbReference type="ChEBI" id="CHEBI:15361"/>
        <dbReference type="ChEBI" id="CHEBI:58689"/>
        <dbReference type="ChEBI" id="CHEBI:58818"/>
        <dbReference type="EC" id="4.2.99.20"/>
    </reaction>
</comment>
<comment type="pathway">
    <text evidence="2">Quinol/quinone metabolism; 1,4-dihydroxy-2-naphthoate biosynthesis; 1,4-dihydroxy-2-naphthoate from chorismate: step 3/7.</text>
</comment>
<comment type="pathway">
    <text evidence="2">Quinol/quinone metabolism; menaquinone biosynthesis.</text>
</comment>
<comment type="subunit">
    <text evidence="2">Monomer.</text>
</comment>
<comment type="similarity">
    <text evidence="2">Belongs to the AB hydrolase superfamily. MenH family.</text>
</comment>
<protein>
    <recommendedName>
        <fullName evidence="2">Putative 2-succinyl-6-hydroxy-2,4-cyclohexadiene-1-carboxylate synthase</fullName>
        <shortName evidence="2">SHCHC synthase</shortName>
        <ecNumber evidence="2">4.2.99.20</ecNumber>
    </recommendedName>
</protein>
<gene>
    <name evidence="2" type="primary">menH</name>
    <name type="ordered locus">HI_0282</name>
</gene>
<accession>P44611</accession>
<sequence>MINIIFLHGLLGTKNDWQKVIENLPHFNCIALDLPFHGQAKDLEVTNFEDSAEYLAQQIKSAVKNGPYFLVGYSLGGRIALYYALQAQLERSNLQGVILEGANLGLKTDEEKQARFQQDFAWAQRFMQESPEKVLNDWYQQPVFSHLTTEERLQLVEKRKSNCGKNIGKMLLATSLSKQPDFSEKVRLSSLPFFYFCGERDHKFQVLAKENQIDLVTIPCAGHNSHLENSKYFSKKIENCILKIVRP</sequence>
<name>MENH_HAEIN</name>
<evidence type="ECO:0000255" key="1"/>
<evidence type="ECO:0000255" key="2">
    <source>
        <dbReference type="HAMAP-Rule" id="MF_01660"/>
    </source>
</evidence>
<proteinExistence type="inferred from homology"/>
<reference key="1">
    <citation type="journal article" date="1995" name="Science">
        <title>Whole-genome random sequencing and assembly of Haemophilus influenzae Rd.</title>
        <authorList>
            <person name="Fleischmann R.D."/>
            <person name="Adams M.D."/>
            <person name="White O."/>
            <person name="Clayton R.A."/>
            <person name="Kirkness E.F."/>
            <person name="Kerlavage A.R."/>
            <person name="Bult C.J."/>
            <person name="Tomb J.-F."/>
            <person name="Dougherty B.A."/>
            <person name="Merrick J.M."/>
            <person name="McKenney K."/>
            <person name="Sutton G.G."/>
            <person name="FitzHugh W."/>
            <person name="Fields C.A."/>
            <person name="Gocayne J.D."/>
            <person name="Scott J.D."/>
            <person name="Shirley R."/>
            <person name="Liu L.-I."/>
            <person name="Glodek A."/>
            <person name="Kelley J.M."/>
            <person name="Weidman J.F."/>
            <person name="Phillips C.A."/>
            <person name="Spriggs T."/>
            <person name="Hedblom E."/>
            <person name="Cotton M.D."/>
            <person name="Utterback T.R."/>
            <person name="Hanna M.C."/>
            <person name="Nguyen D.T."/>
            <person name="Saudek D.M."/>
            <person name="Brandon R.C."/>
            <person name="Fine L.D."/>
            <person name="Fritchman J.L."/>
            <person name="Fuhrmann J.L."/>
            <person name="Geoghagen N.S.M."/>
            <person name="Gnehm C.L."/>
            <person name="McDonald L.A."/>
            <person name="Small K.V."/>
            <person name="Fraser C.M."/>
            <person name="Smith H.O."/>
            <person name="Venter J.C."/>
        </authorList>
    </citation>
    <scope>NUCLEOTIDE SEQUENCE [LARGE SCALE GENOMIC DNA]</scope>
    <source>
        <strain>ATCC 51907 / DSM 11121 / KW20 / Rd</strain>
    </source>
</reference>
<keyword id="KW-0456">Lyase</keyword>
<keyword id="KW-0474">Menaquinone biosynthesis</keyword>
<keyword id="KW-1185">Reference proteome</keyword>
<dbReference type="EC" id="4.2.99.20" evidence="2"/>
<dbReference type="EMBL" id="L42023">
    <property type="protein sequence ID" value="AAC21945.1"/>
    <property type="molecule type" value="Genomic_DNA"/>
</dbReference>
<dbReference type="PIR" id="B64147">
    <property type="entry name" value="B64147"/>
</dbReference>
<dbReference type="RefSeq" id="NP_438450.1">
    <property type="nucleotide sequence ID" value="NC_000907.1"/>
</dbReference>
<dbReference type="SMR" id="P44611"/>
<dbReference type="STRING" id="71421.HI_0282"/>
<dbReference type="ESTHER" id="haein-yfbb">
    <property type="family name" value="MenH_SHCHC"/>
</dbReference>
<dbReference type="EnsemblBacteria" id="AAC21945">
    <property type="protein sequence ID" value="AAC21945"/>
    <property type="gene ID" value="HI_0282"/>
</dbReference>
<dbReference type="KEGG" id="hin:HI_0282"/>
<dbReference type="PATRIC" id="fig|71421.8.peg.298"/>
<dbReference type="eggNOG" id="COG2267">
    <property type="taxonomic scope" value="Bacteria"/>
</dbReference>
<dbReference type="HOGENOM" id="CLU_020336_38_2_6"/>
<dbReference type="OrthoDB" id="9808398at2"/>
<dbReference type="PhylomeDB" id="P44611"/>
<dbReference type="BioCyc" id="HINF71421:G1GJ1-301-MONOMER"/>
<dbReference type="UniPathway" id="UPA00079"/>
<dbReference type="UniPathway" id="UPA01057">
    <property type="reaction ID" value="UER00900"/>
</dbReference>
<dbReference type="Proteomes" id="UP000000579">
    <property type="component" value="Chromosome"/>
</dbReference>
<dbReference type="GO" id="GO:0070205">
    <property type="term" value="F:2-succinyl-6-hydroxy-2,4-cyclohexadiene-1-carboxylate synthase activity"/>
    <property type="evidence" value="ECO:0007669"/>
    <property type="project" value="UniProtKB-UniRule"/>
</dbReference>
<dbReference type="GO" id="GO:0009234">
    <property type="term" value="P:menaquinone biosynthetic process"/>
    <property type="evidence" value="ECO:0007669"/>
    <property type="project" value="UniProtKB-UniRule"/>
</dbReference>
<dbReference type="Gene3D" id="3.40.50.1820">
    <property type="entry name" value="alpha/beta hydrolase"/>
    <property type="match status" value="1"/>
</dbReference>
<dbReference type="HAMAP" id="MF_01660">
    <property type="entry name" value="MenH"/>
    <property type="match status" value="1"/>
</dbReference>
<dbReference type="InterPro" id="IPR000073">
    <property type="entry name" value="AB_hydrolase_1"/>
</dbReference>
<dbReference type="InterPro" id="IPR029058">
    <property type="entry name" value="AB_hydrolase_fold"/>
</dbReference>
<dbReference type="InterPro" id="IPR022485">
    <property type="entry name" value="SHCHC_synthase_MenH"/>
</dbReference>
<dbReference type="NCBIfam" id="TIGR03695">
    <property type="entry name" value="menH_SHCHC"/>
    <property type="match status" value="1"/>
</dbReference>
<dbReference type="NCBIfam" id="NF008340">
    <property type="entry name" value="PRK11126.1"/>
    <property type="match status" value="1"/>
</dbReference>
<dbReference type="PANTHER" id="PTHR42916">
    <property type="entry name" value="2-SUCCINYL-5-ENOLPYRUVYL-6-HYDROXY-3-CYCLOHEXENE-1-CARBOXYLATE SYNTHASE"/>
    <property type="match status" value="1"/>
</dbReference>
<dbReference type="PANTHER" id="PTHR42916:SF1">
    <property type="entry name" value="PROTEIN PHYLLO, CHLOROPLASTIC"/>
    <property type="match status" value="1"/>
</dbReference>
<dbReference type="Pfam" id="PF00561">
    <property type="entry name" value="Abhydrolase_1"/>
    <property type="match status" value="1"/>
</dbReference>
<dbReference type="SUPFAM" id="SSF53474">
    <property type="entry name" value="alpha/beta-Hydrolases"/>
    <property type="match status" value="1"/>
</dbReference>
<organism>
    <name type="scientific">Haemophilus influenzae (strain ATCC 51907 / DSM 11121 / KW20 / Rd)</name>
    <dbReference type="NCBI Taxonomy" id="71421"/>
    <lineage>
        <taxon>Bacteria</taxon>
        <taxon>Pseudomonadati</taxon>
        <taxon>Pseudomonadota</taxon>
        <taxon>Gammaproteobacteria</taxon>
        <taxon>Pasteurellales</taxon>
        <taxon>Pasteurellaceae</taxon>
        <taxon>Haemophilus</taxon>
    </lineage>
</organism>
<feature type="chain" id="PRO_0000169175" description="Putative 2-succinyl-6-hydroxy-2,4-cyclohexadiene-1-carboxylate synthase">
    <location>
        <begin position="1"/>
        <end position="247"/>
    </location>
</feature>
<feature type="domain" description="AB hydrolase-1" evidence="1">
    <location>
        <begin position="4"/>
        <end position="229"/>
    </location>
</feature>